<name>CNBL5_ORYSJ</name>
<comment type="function">
    <text evidence="1">Acts as a calcium sensor. CBL proteins interact with CIPK serine-threonine protein kinases. Binding of a CBL protein to the regulatory NAF domain of a CIPK protein lead to the activation of the kinase in a calcium-dependent manner (By similarity).</text>
</comment>
<comment type="subunit">
    <text evidence="1">Homodimer.</text>
</comment>
<comment type="tissue specificity">
    <text evidence="3">Expressed at low levels in roots, shoots, culms, leaves and young spikelets.</text>
</comment>
<comment type="induction">
    <text evidence="3">By salt, drought and cold stresses, and abscisic acid (ABA).</text>
</comment>
<comment type="similarity">
    <text evidence="4">Belongs to the calcineurin regulatory subunit family.</text>
</comment>
<comment type="sequence caution" evidence="4">
    <conflict type="erroneous initiation">
        <sequence resource="EMBL-CDS" id="BAD53426"/>
    </conflict>
</comment>
<protein>
    <recommendedName>
        <fullName>Calcineurin B-like protein 5</fullName>
    </recommendedName>
</protein>
<gene>
    <name type="primary">CBL5</name>
    <name type="ordered locus">Os01g0598200</name>
    <name type="ordered locus">LOC_Os01g41510</name>
    <name type="ORF">P0025A05.19</name>
</gene>
<feature type="chain" id="PRO_0000337768" description="Calcineurin B-like protein 5">
    <location>
        <begin position="1"/>
        <end position="218"/>
    </location>
</feature>
<feature type="domain" description="EF-hand 1" evidence="4">
    <location>
        <begin position="35"/>
        <end position="69"/>
    </location>
</feature>
<feature type="domain" description="EF-hand 2" evidence="2">
    <location>
        <begin position="70"/>
        <end position="105"/>
    </location>
</feature>
<feature type="domain" description="EF-hand 3" evidence="2">
    <location>
        <begin position="107"/>
        <end position="142"/>
    </location>
</feature>
<feature type="domain" description="EF-hand 4" evidence="2">
    <location>
        <begin position="151"/>
        <end position="186"/>
    </location>
</feature>
<feature type="site" description="Involved in dimerization" evidence="1">
    <location>
        <position position="143"/>
    </location>
</feature>
<accession>Q3HRP2</accession>
<accession>B7F3W5</accession>
<accession>Q5ZAG5</accession>
<dbReference type="EMBL" id="DQ201199">
    <property type="protein sequence ID" value="ABA54180.1"/>
    <property type="molecule type" value="mRNA"/>
</dbReference>
<dbReference type="EMBL" id="AP003504">
    <property type="protein sequence ID" value="BAD53426.1"/>
    <property type="status" value="ALT_INIT"/>
    <property type="molecule type" value="Genomic_DNA"/>
</dbReference>
<dbReference type="EMBL" id="AP008207">
    <property type="protein sequence ID" value="BAF05397.1"/>
    <property type="molecule type" value="Genomic_DNA"/>
</dbReference>
<dbReference type="EMBL" id="AP014957">
    <property type="protein sequence ID" value="BAS73003.1"/>
    <property type="molecule type" value="Genomic_DNA"/>
</dbReference>
<dbReference type="EMBL" id="AK111570">
    <property type="protein sequence ID" value="BAG99312.1"/>
    <property type="molecule type" value="mRNA"/>
</dbReference>
<dbReference type="RefSeq" id="XP_015631531.1">
    <property type="nucleotide sequence ID" value="XM_015776045.1"/>
</dbReference>
<dbReference type="SMR" id="Q3HRP2"/>
<dbReference type="BioGRID" id="794999">
    <property type="interactions" value="16"/>
</dbReference>
<dbReference type="FunCoup" id="Q3HRP2">
    <property type="interactions" value="389"/>
</dbReference>
<dbReference type="STRING" id="39947.Q3HRP2"/>
<dbReference type="PaxDb" id="39947-Q3HRP2"/>
<dbReference type="EnsemblPlants" id="Os01t0598200-01">
    <property type="protein sequence ID" value="Os01t0598200-01"/>
    <property type="gene ID" value="Os01g0598200"/>
</dbReference>
<dbReference type="Gramene" id="Os01t0598200-01">
    <property type="protein sequence ID" value="Os01t0598200-01"/>
    <property type="gene ID" value="Os01g0598200"/>
</dbReference>
<dbReference type="KEGG" id="dosa:Os01g0598200"/>
<dbReference type="eggNOG" id="KOG0034">
    <property type="taxonomic scope" value="Eukaryota"/>
</dbReference>
<dbReference type="HOGENOM" id="CLU_061288_21_0_1"/>
<dbReference type="InParanoid" id="Q3HRP2"/>
<dbReference type="OMA" id="FGIWEPL"/>
<dbReference type="OrthoDB" id="191686at2759"/>
<dbReference type="Proteomes" id="UP000000763">
    <property type="component" value="Chromosome 1"/>
</dbReference>
<dbReference type="Proteomes" id="UP000059680">
    <property type="component" value="Chromosome 1"/>
</dbReference>
<dbReference type="GO" id="GO:0005509">
    <property type="term" value="F:calcium ion binding"/>
    <property type="evidence" value="ECO:0007669"/>
    <property type="project" value="InterPro"/>
</dbReference>
<dbReference type="GO" id="GO:0019900">
    <property type="term" value="F:kinase binding"/>
    <property type="evidence" value="ECO:0007669"/>
    <property type="project" value="InterPro"/>
</dbReference>
<dbReference type="GO" id="GO:0019722">
    <property type="term" value="P:calcium-mediated signaling"/>
    <property type="evidence" value="ECO:0007669"/>
    <property type="project" value="InterPro"/>
</dbReference>
<dbReference type="FunFam" id="1.10.238.10:FF:000073">
    <property type="entry name" value="calcineurin B-like protein 3"/>
    <property type="match status" value="1"/>
</dbReference>
<dbReference type="Gene3D" id="1.10.238.10">
    <property type="entry name" value="EF-hand"/>
    <property type="match status" value="1"/>
</dbReference>
<dbReference type="InterPro" id="IPR045198">
    <property type="entry name" value="CNBL1-10"/>
</dbReference>
<dbReference type="InterPro" id="IPR011992">
    <property type="entry name" value="EF-hand-dom_pair"/>
</dbReference>
<dbReference type="InterPro" id="IPR002048">
    <property type="entry name" value="EF_hand_dom"/>
</dbReference>
<dbReference type="PANTHER" id="PTHR23056">
    <property type="entry name" value="CALCINEURIN B"/>
    <property type="match status" value="1"/>
</dbReference>
<dbReference type="PANTHER" id="PTHR23056:SF88">
    <property type="entry name" value="CALCINEURIN B-LIKE PROTEIN 5"/>
    <property type="match status" value="1"/>
</dbReference>
<dbReference type="Pfam" id="PF13202">
    <property type="entry name" value="EF-hand_5"/>
    <property type="match status" value="1"/>
</dbReference>
<dbReference type="Pfam" id="PF13499">
    <property type="entry name" value="EF-hand_7"/>
    <property type="match status" value="1"/>
</dbReference>
<dbReference type="PRINTS" id="PR00450">
    <property type="entry name" value="RECOVERIN"/>
</dbReference>
<dbReference type="SMART" id="SM00054">
    <property type="entry name" value="EFh"/>
    <property type="match status" value="3"/>
</dbReference>
<dbReference type="SUPFAM" id="SSF47473">
    <property type="entry name" value="EF-hand"/>
    <property type="match status" value="1"/>
</dbReference>
<dbReference type="PROSITE" id="PS50222">
    <property type="entry name" value="EF_HAND_2"/>
    <property type="match status" value="3"/>
</dbReference>
<reference key="1">
    <citation type="journal article" date="2008" name="Gene">
        <title>Expression analysis of the calcineurin B-like gene family in rice (Oryza sativa L.) under environmental stresses.</title>
        <authorList>
            <person name="Gu Z."/>
            <person name="Ma B."/>
            <person name="Jiang Y."/>
            <person name="Chen Z."/>
            <person name="Su X."/>
            <person name="Zhang H."/>
        </authorList>
    </citation>
    <scope>NUCLEOTIDE SEQUENCE [MRNA]</scope>
    <scope>TISSUE SPECIFICITY</scope>
    <scope>INDUCTION</scope>
    <scope>GENE FAMILY</scope>
    <source>
        <strain>cv. Nipponbare</strain>
        <tissue>Seedling</tissue>
    </source>
</reference>
<reference key="2">
    <citation type="journal article" date="2002" name="Nature">
        <title>The genome sequence and structure of rice chromosome 1.</title>
        <authorList>
            <person name="Sasaki T."/>
            <person name="Matsumoto T."/>
            <person name="Yamamoto K."/>
            <person name="Sakata K."/>
            <person name="Baba T."/>
            <person name="Katayose Y."/>
            <person name="Wu J."/>
            <person name="Niimura Y."/>
            <person name="Cheng Z."/>
            <person name="Nagamura Y."/>
            <person name="Antonio B.A."/>
            <person name="Kanamori H."/>
            <person name="Hosokawa S."/>
            <person name="Masukawa M."/>
            <person name="Arikawa K."/>
            <person name="Chiden Y."/>
            <person name="Hayashi M."/>
            <person name="Okamoto M."/>
            <person name="Ando T."/>
            <person name="Aoki H."/>
            <person name="Arita K."/>
            <person name="Hamada M."/>
            <person name="Harada C."/>
            <person name="Hijishita S."/>
            <person name="Honda M."/>
            <person name="Ichikawa Y."/>
            <person name="Idonuma A."/>
            <person name="Iijima M."/>
            <person name="Ikeda M."/>
            <person name="Ikeno M."/>
            <person name="Ito S."/>
            <person name="Ito T."/>
            <person name="Ito Y."/>
            <person name="Ito Y."/>
            <person name="Iwabuchi A."/>
            <person name="Kamiya K."/>
            <person name="Karasawa W."/>
            <person name="Katagiri S."/>
            <person name="Kikuta A."/>
            <person name="Kobayashi N."/>
            <person name="Kono I."/>
            <person name="Machita K."/>
            <person name="Maehara T."/>
            <person name="Mizuno H."/>
            <person name="Mizubayashi T."/>
            <person name="Mukai Y."/>
            <person name="Nagasaki H."/>
            <person name="Nakashima M."/>
            <person name="Nakama Y."/>
            <person name="Nakamichi Y."/>
            <person name="Nakamura M."/>
            <person name="Namiki N."/>
            <person name="Negishi M."/>
            <person name="Ohta I."/>
            <person name="Ono N."/>
            <person name="Saji S."/>
            <person name="Sakai K."/>
            <person name="Shibata M."/>
            <person name="Shimokawa T."/>
            <person name="Shomura A."/>
            <person name="Song J."/>
            <person name="Takazaki Y."/>
            <person name="Terasawa K."/>
            <person name="Tsuji K."/>
            <person name="Waki K."/>
            <person name="Yamagata H."/>
            <person name="Yamane H."/>
            <person name="Yoshiki S."/>
            <person name="Yoshihara R."/>
            <person name="Yukawa K."/>
            <person name="Zhong H."/>
            <person name="Iwama H."/>
            <person name="Endo T."/>
            <person name="Ito H."/>
            <person name="Hahn J.H."/>
            <person name="Kim H.-I."/>
            <person name="Eun M.-Y."/>
            <person name="Yano M."/>
            <person name="Jiang J."/>
            <person name="Gojobori T."/>
        </authorList>
    </citation>
    <scope>NUCLEOTIDE SEQUENCE [LARGE SCALE GENOMIC DNA]</scope>
    <source>
        <strain>cv. Nipponbare</strain>
    </source>
</reference>
<reference key="3">
    <citation type="journal article" date="2005" name="Nature">
        <title>The map-based sequence of the rice genome.</title>
        <authorList>
            <consortium name="International rice genome sequencing project (IRGSP)"/>
        </authorList>
    </citation>
    <scope>NUCLEOTIDE SEQUENCE [LARGE SCALE GENOMIC DNA]</scope>
    <source>
        <strain>cv. Nipponbare</strain>
    </source>
</reference>
<reference key="4">
    <citation type="journal article" date="2008" name="Nucleic Acids Res.">
        <title>The rice annotation project database (RAP-DB): 2008 update.</title>
        <authorList>
            <consortium name="The rice annotation project (RAP)"/>
        </authorList>
    </citation>
    <scope>GENOME REANNOTATION</scope>
    <source>
        <strain>cv. Nipponbare</strain>
    </source>
</reference>
<reference key="5">
    <citation type="journal article" date="2013" name="Rice">
        <title>Improvement of the Oryza sativa Nipponbare reference genome using next generation sequence and optical map data.</title>
        <authorList>
            <person name="Kawahara Y."/>
            <person name="de la Bastide M."/>
            <person name="Hamilton J.P."/>
            <person name="Kanamori H."/>
            <person name="McCombie W.R."/>
            <person name="Ouyang S."/>
            <person name="Schwartz D.C."/>
            <person name="Tanaka T."/>
            <person name="Wu J."/>
            <person name="Zhou S."/>
            <person name="Childs K.L."/>
            <person name="Davidson R.M."/>
            <person name="Lin H."/>
            <person name="Quesada-Ocampo L."/>
            <person name="Vaillancourt B."/>
            <person name="Sakai H."/>
            <person name="Lee S.S."/>
            <person name="Kim J."/>
            <person name="Numa H."/>
            <person name="Itoh T."/>
            <person name="Buell C.R."/>
            <person name="Matsumoto T."/>
        </authorList>
    </citation>
    <scope>GENOME REANNOTATION</scope>
    <source>
        <strain>cv. Nipponbare</strain>
    </source>
</reference>
<reference key="6">
    <citation type="journal article" date="2003" name="Science">
        <title>Collection, mapping, and annotation of over 28,000 cDNA clones from japonica rice.</title>
        <authorList>
            <consortium name="The rice full-length cDNA consortium"/>
        </authorList>
    </citation>
    <scope>NUCLEOTIDE SEQUENCE [LARGE SCALE MRNA]</scope>
    <source>
        <strain>cv. Nipponbare</strain>
    </source>
</reference>
<reference key="7">
    <citation type="journal article" date="2004" name="Plant Physiol.">
        <title>Calcium sensors and their interacting protein kinases: genomics of the Arabidopsis and rice CBL-CIPK signaling networks.</title>
        <authorList>
            <person name="Kolukisaoglu U."/>
            <person name="Weinl S."/>
            <person name="Blazevic D."/>
            <person name="Batistic O."/>
            <person name="Kudla J."/>
        </authorList>
    </citation>
    <scope>GENE FAMILY</scope>
    <scope>NOMENCLATURE</scope>
</reference>
<reference key="8">
    <citation type="journal article" date="2005" name="Plant Physiol.">
        <title>A gibberellin-regulated calcineurin B in rice localizes to the tonoplast and is implicated in vacuole function.</title>
        <authorList>
            <person name="Hwang Y.-S."/>
            <person name="Bethke P.C."/>
            <person name="Cheong Y.H."/>
            <person name="Chang H.-S."/>
            <person name="Zhu T."/>
            <person name="Jones R.L."/>
        </authorList>
    </citation>
    <scope>GENE FAMILY</scope>
</reference>
<organism>
    <name type="scientific">Oryza sativa subsp. japonica</name>
    <name type="common">Rice</name>
    <dbReference type="NCBI Taxonomy" id="39947"/>
    <lineage>
        <taxon>Eukaryota</taxon>
        <taxon>Viridiplantae</taxon>
        <taxon>Streptophyta</taxon>
        <taxon>Embryophyta</taxon>
        <taxon>Tracheophyta</taxon>
        <taxon>Spermatophyta</taxon>
        <taxon>Magnoliopsida</taxon>
        <taxon>Liliopsida</taxon>
        <taxon>Poales</taxon>
        <taxon>Poaceae</taxon>
        <taxon>BOP clade</taxon>
        <taxon>Oryzoideae</taxon>
        <taxon>Oryzeae</taxon>
        <taxon>Oryzinae</taxon>
        <taxon>Oryza</taxon>
        <taxon>Oryza sativa</taxon>
    </lineage>
</organism>
<proteinExistence type="evidence at transcript level"/>
<evidence type="ECO:0000250" key="1"/>
<evidence type="ECO:0000255" key="2">
    <source>
        <dbReference type="PROSITE-ProRule" id="PRU00448"/>
    </source>
</evidence>
<evidence type="ECO:0000269" key="3">
    <source>
    </source>
</evidence>
<evidence type="ECO:0000305" key="4"/>
<keyword id="KW-1185">Reference proteome</keyword>
<keyword id="KW-0677">Repeat</keyword>
<sequence length="218" mass="25088">MMGCLPTKQVGRSTHSLNPREAVALAAETSFTVNEVEALYDLFRKLSNSIIKDGLIHKEEFHLALFRNKKTNLFVDRVFDLFDQKGNGVIEFDEFVRSLSVFHPDAPEEQKAGFAFKLYDLRQTGFIERHELKEMVLALLDESDLNITSDAVEMIVDRTFDQADTKGDERIDQEEWNEFVKNNPYVLRNMTLPYLKDLTMVFPSFVIHSEVSEADMVA</sequence>